<dbReference type="SMR" id="P0C8T3"/>
<dbReference type="GO" id="GO:0005576">
    <property type="term" value="C:extracellular region"/>
    <property type="evidence" value="ECO:0007669"/>
    <property type="project" value="UniProtKB-SubCell"/>
</dbReference>
<dbReference type="GO" id="GO:0042742">
    <property type="term" value="P:defense response to bacterium"/>
    <property type="evidence" value="ECO:0007669"/>
    <property type="project" value="UniProtKB-KW"/>
</dbReference>
<dbReference type="InterPro" id="IPR012521">
    <property type="entry name" value="Antimicrobial_frog_2"/>
</dbReference>
<dbReference type="Pfam" id="PF08023">
    <property type="entry name" value="Antimicrobial_2"/>
    <property type="match status" value="1"/>
</dbReference>
<evidence type="ECO:0000269" key="1">
    <source>
    </source>
</evidence>
<evidence type="ECO:0000305" key="2"/>
<accession>P0C8T3</accession>
<comment type="function">
    <text evidence="1">Has antibacterial activity against the Gram-positive bacterium S.aureus ATCC 25923 (MIC=18 uM) and the Gram-negative bacterium E.coli ATCC 25726 (MIC=18 uM).</text>
</comment>
<comment type="subcellular location">
    <subcellularLocation>
        <location>Secreted</location>
    </subcellularLocation>
</comment>
<comment type="tissue specificity">
    <text>Expressed by the skin glands.</text>
</comment>
<comment type="mass spectrometry"/>
<comment type="similarity">
    <text evidence="2">Belongs to the frog skin active peptide (FSAP) family. Brevinin subfamily.</text>
</comment>
<name>BR2A_PULPI</name>
<proteinExistence type="evidence at protein level"/>
<keyword id="KW-0878">Amphibian defense peptide</keyword>
<keyword id="KW-0044">Antibiotic</keyword>
<keyword id="KW-0929">Antimicrobial</keyword>
<keyword id="KW-0903">Direct protein sequencing</keyword>
<keyword id="KW-1015">Disulfide bond</keyword>
<keyword id="KW-0964">Secreted</keyword>
<protein>
    <recommendedName>
        <fullName>Brevinin-2PTa</fullName>
    </recommendedName>
</protein>
<organism>
    <name type="scientific">Pulchrana picturata</name>
    <name type="common">Malaysian fire frog</name>
    <name type="synonym">Hylarana picturata</name>
    <dbReference type="NCBI Taxonomy" id="395594"/>
    <lineage>
        <taxon>Eukaryota</taxon>
        <taxon>Metazoa</taxon>
        <taxon>Chordata</taxon>
        <taxon>Craniata</taxon>
        <taxon>Vertebrata</taxon>
        <taxon>Euteleostomi</taxon>
        <taxon>Amphibia</taxon>
        <taxon>Batrachia</taxon>
        <taxon>Anura</taxon>
        <taxon>Neobatrachia</taxon>
        <taxon>Ranoidea</taxon>
        <taxon>Ranidae</taxon>
        <taxon>Pulchrana</taxon>
    </lineage>
</organism>
<feature type="peptide" id="PRO_0000366041" description="Brevinin-2PTa">
    <location>
        <begin position="1"/>
        <end position="30"/>
    </location>
</feature>
<feature type="disulfide bond">
    <location>
        <begin position="24"/>
        <end position="30"/>
    </location>
</feature>
<reference key="1">
    <citation type="journal article" date="2008" name="Toxicon">
        <title>Characterization of antimicrobial peptides from the skin secretions of the Malaysian frogs, Odorrana hosii and Hylarana picturata (Anura:Ranidae).</title>
        <authorList>
            <person name="Conlon J.M."/>
            <person name="Kolodziejek J."/>
            <person name="Nowotny N."/>
            <person name="Leprince J."/>
            <person name="Vaudry H."/>
            <person name="Coquet L."/>
            <person name="Jouenne T."/>
            <person name="King J.D."/>
        </authorList>
    </citation>
    <scope>PROTEIN SEQUENCE</scope>
    <scope>FUNCTION</scope>
    <scope>MASS SPECTROMETRY</scope>
    <source>
        <tissue>Skin secretion</tissue>
    </source>
</reference>
<sequence>GAIKDALKGAAKTVAVELLKKAQCKLEKTC</sequence>